<comment type="function">
    <text evidence="8 9">Endoplasmic reticulum translocase required to remove mitochondrial transmembrane proteins mistargeted to the endoplasmic reticulum (PubMed:32973005, PubMed:36264797). Acts as a dislocase that mediates the ATP-dependent extraction of mislocalized mitochondrial transmembrane proteins from the endoplasmic reticulum membrane (PubMed:32973005). Specifically binds mitochondrial tail-anchored transmembrane proteins: has an atypically large substrate-binding pocket that recognizes and binds moderately hydrophobic transmembranes with short hydrophilic lumenal domains (PubMed:32973005).</text>
</comment>
<comment type="catalytic activity">
    <reaction evidence="8">
        <text>[protein]-with a C-terminal TM segment(out) + ATP + H2O = [protein]-with a C-terminal TM segment(in) + ADP + phosphate + H(+)</text>
        <dbReference type="Rhea" id="RHEA:66168"/>
        <dbReference type="Rhea" id="RHEA-COMP:16963"/>
        <dbReference type="ChEBI" id="CHEBI:15377"/>
        <dbReference type="ChEBI" id="CHEBI:15378"/>
        <dbReference type="ChEBI" id="CHEBI:30616"/>
        <dbReference type="ChEBI" id="CHEBI:43474"/>
        <dbReference type="ChEBI" id="CHEBI:90782"/>
        <dbReference type="ChEBI" id="CHEBI:456216"/>
    </reaction>
</comment>
<comment type="interaction">
    <interactant intactId="EBI-3940599">
        <id>Q9HD20</id>
    </interactant>
    <interactant intactId="EBI-1811414">
        <id>Q9C0D3</id>
        <label>ZYG11B</label>
    </interactant>
    <organismsDiffer>false</organismsDiffer>
    <experiments>2</experiments>
</comment>
<comment type="interaction">
    <interactant intactId="EBI-12069500">
        <id>Q9HD20-3</id>
    </interactant>
    <interactant intactId="EBI-743771">
        <id>Q92624</id>
        <label>APPBP2</label>
    </interactant>
    <organismsDiffer>false</organismsDiffer>
    <experiments>3</experiments>
</comment>
<comment type="interaction">
    <interactant intactId="EBI-12069500">
        <id>Q9HD20-3</id>
    </interactant>
    <interactant intactId="EBI-13059134">
        <id>Q13520</id>
        <label>AQP6</label>
    </interactant>
    <organismsDiffer>false</organismsDiffer>
    <experiments>3</experiments>
</comment>
<comment type="interaction">
    <interactant intactId="EBI-12069500">
        <id>Q9HD20-3</id>
    </interactant>
    <interactant intactId="EBI-19051169">
        <id>Q8N350-4</id>
        <label>CBARP</label>
    </interactant>
    <organismsDiffer>false</organismsDiffer>
    <experiments>3</experiments>
</comment>
<comment type="interaction">
    <interactant intactId="EBI-12069500">
        <id>Q9HD20-3</id>
    </interactant>
    <interactant intactId="EBI-2835281">
        <id>P25025</id>
        <label>CXCR2</label>
    </interactant>
    <organismsDiffer>false</organismsDiffer>
    <experiments>3</experiments>
</comment>
<comment type="interaction">
    <interactant intactId="EBI-12069500">
        <id>Q9HD20-3</id>
    </interactant>
    <interactant intactId="EBI-3915253">
        <id>Q15125</id>
        <label>EBP</label>
    </interactant>
    <organismsDiffer>false</organismsDiffer>
    <experiments>3</experiments>
</comment>
<comment type="interaction">
    <interactant intactId="EBI-12069500">
        <id>Q9HD20-3</id>
    </interactant>
    <interactant intactId="EBI-18535450">
        <id>Q9GZR5</id>
        <label>ELOVL4</label>
    </interactant>
    <organismsDiffer>false</organismsDiffer>
    <experiments>3</experiments>
</comment>
<comment type="interaction">
    <interactant intactId="EBI-12069500">
        <id>Q9HD20-3</id>
    </interactant>
    <interactant intactId="EBI-18304435">
        <id>Q5JX71</id>
        <label>FAM209A</label>
    </interactant>
    <organismsDiffer>false</organismsDiffer>
    <experiments>3</experiments>
</comment>
<comment type="interaction">
    <interactant intactId="EBI-12069500">
        <id>Q9HD20-3</id>
    </interactant>
    <interactant intactId="EBI-2833872">
        <id>O15552</id>
        <label>FFAR2</label>
    </interactant>
    <organismsDiffer>false</organismsDiffer>
    <experiments>3</experiments>
</comment>
<comment type="interaction">
    <interactant intactId="EBI-12069500">
        <id>Q9HD20-3</id>
    </interactant>
    <interactant intactId="EBI-18076404">
        <id>O15529</id>
        <label>GPR42</label>
    </interactant>
    <organismsDiffer>false</organismsDiffer>
    <experiments>3</experiments>
</comment>
<comment type="interaction">
    <interactant intactId="EBI-12069500">
        <id>Q9HD20-3</id>
    </interactant>
    <interactant intactId="EBI-12900093">
        <id>Q8IZD2-3</id>
        <label>KMT2E</label>
    </interactant>
    <organismsDiffer>false</organismsDiffer>
    <experiments>3</experiments>
</comment>
<comment type="interaction">
    <interactant intactId="EBI-12069500">
        <id>Q9HD20-3</id>
    </interactant>
    <interactant intactId="EBI-3867271">
        <id>Q9NQG1</id>
        <label>MANBAL</label>
    </interactant>
    <organismsDiffer>false</organismsDiffer>
    <experiments>3</experiments>
</comment>
<comment type="interaction">
    <interactant intactId="EBI-12069500">
        <id>Q9HD20-3</id>
    </interactant>
    <interactant intactId="EBI-373355">
        <id>Q5SR56</id>
        <label>MFSD14B</label>
    </interactant>
    <organismsDiffer>false</organismsDiffer>
    <experiments>3</experiments>
</comment>
<comment type="interaction">
    <interactant intactId="EBI-12069500">
        <id>Q9HD20-3</id>
    </interactant>
    <interactant intactId="EBI-17873222">
        <id>Q15546</id>
        <label>MMD</label>
    </interactant>
    <organismsDiffer>false</organismsDiffer>
    <experiments>3</experiments>
</comment>
<comment type="interaction">
    <interactant intactId="EBI-12069500">
        <id>Q9HD20-3</id>
    </interactant>
    <interactant intactId="EBI-18397230">
        <id>Q6P5S7</id>
        <label>RNASEK</label>
    </interactant>
    <organismsDiffer>false</organismsDiffer>
    <experiments>3</experiments>
</comment>
<comment type="interaction">
    <interactant intactId="EBI-12069500">
        <id>Q9HD20-3</id>
    </interactant>
    <interactant intactId="EBI-17247926">
        <id>Q9NY72</id>
        <label>SCN3B</label>
    </interactant>
    <organismsDiffer>false</organismsDiffer>
    <experiments>3</experiments>
</comment>
<comment type="interaction">
    <interactant intactId="EBI-12069500">
        <id>Q9HD20-3</id>
    </interactant>
    <interactant intactId="EBI-18159983">
        <id>Q3KNW5</id>
        <label>SLC10A6</label>
    </interactant>
    <organismsDiffer>false</organismsDiffer>
    <experiments>3</experiments>
</comment>
<comment type="interaction">
    <interactant intactId="EBI-12069500">
        <id>Q9HD20-3</id>
    </interactant>
    <interactant intactId="EBI-12243266">
        <id>Q7RTY0</id>
        <label>SLC16A13</label>
    </interactant>
    <organismsDiffer>false</organismsDiffer>
    <experiments>3</experiments>
</comment>
<comment type="interaction">
    <interactant intactId="EBI-12069500">
        <id>Q9HD20-3</id>
    </interactant>
    <interactant intactId="EBI-8644112">
        <id>Q9BRI3</id>
        <label>SLC30A2</label>
    </interactant>
    <organismsDiffer>false</organismsDiffer>
    <experiments>3</experiments>
</comment>
<comment type="interaction">
    <interactant intactId="EBI-12069500">
        <id>Q9HD20-3</id>
    </interactant>
    <interactant intactId="EBI-10262251">
        <id>Q8IWU4</id>
        <label>SLC30A8</label>
    </interactant>
    <organismsDiffer>false</organismsDiffer>
    <experiments>3</experiments>
</comment>
<comment type="interaction">
    <interactant intactId="EBI-12069500">
        <id>Q9HD20-3</id>
    </interactant>
    <interactant intactId="EBI-17295964">
        <id>Q9NQQ7-3</id>
        <label>SLC35C2</label>
    </interactant>
    <organismsDiffer>false</organismsDiffer>
    <experiments>3</experiments>
</comment>
<comment type="interaction">
    <interactant intactId="EBI-12069500">
        <id>Q9HD20-3</id>
    </interactant>
    <interactant intactId="EBI-18196631">
        <id>Q5VXT5-2</id>
        <label>SYPL2</label>
    </interactant>
    <organismsDiffer>false</organismsDiffer>
    <experiments>3</experiments>
</comment>
<comment type="interaction">
    <interactant intactId="EBI-12069500">
        <id>Q9HD20-3</id>
    </interactant>
    <interactant intactId="EBI-12947623">
        <id>Q96MV1</id>
        <label>TLCD4</label>
    </interactant>
    <organismsDiffer>false</organismsDiffer>
    <experiments>3</experiments>
</comment>
<comment type="interaction">
    <interactant intactId="EBI-12069500">
        <id>Q9HD20-3</id>
    </interactant>
    <interactant intactId="EBI-1045825">
        <id>P55061</id>
        <label>TMBIM6</label>
    </interactant>
    <organismsDiffer>false</organismsDiffer>
    <experiments>3</experiments>
</comment>
<comment type="interaction">
    <interactant intactId="EBI-12069500">
        <id>Q9HD20-3</id>
    </interactant>
    <interactant intactId="EBI-8638294">
        <id>Q9NUH8</id>
        <label>TMEM14B</label>
    </interactant>
    <organismsDiffer>false</organismsDiffer>
    <experiments>3</experiments>
</comment>
<comment type="interaction">
    <interactant intactId="EBI-12069500">
        <id>Q9HD20-3</id>
    </interactant>
    <interactant intactId="EBI-10982110">
        <id>Q96Q45-2</id>
        <label>TMEM237</label>
    </interactant>
    <organismsDiffer>false</organismsDiffer>
    <experiments>3</experiments>
</comment>
<comment type="interaction">
    <interactant intactId="EBI-12069500">
        <id>Q9HD20-3</id>
    </interactant>
    <interactant intactId="EBI-13356252">
        <id>Q86WB7-2</id>
        <label>UNC93A</label>
    </interactant>
    <organismsDiffer>false</organismsDiffer>
    <experiments>3</experiments>
</comment>
<comment type="interaction">
    <interactant intactId="EBI-12069500">
        <id>Q9HD20-3</id>
    </interactant>
    <interactant intactId="EBI-1055364">
        <id>Q3ZAQ7</id>
        <label>VMA21</label>
    </interactant>
    <organismsDiffer>false</organismsDiffer>
    <experiments>3</experiments>
</comment>
<comment type="subcellular location">
    <subcellularLocation>
        <location evidence="6">Endoplasmic reticulum membrane</location>
        <topology evidence="6">Multi-pass membrane protein</topology>
    </subcellularLocation>
</comment>
<comment type="alternative products">
    <event type="alternative splicing"/>
    <isoform>
        <id>Q9HD20-1</id>
        <name>A</name>
        <sequence type="displayed"/>
    </isoform>
    <isoform>
        <id>Q9HD20-2</id>
        <name>B</name>
        <sequence type="described" ref="VSP_000434 VSP_000435"/>
    </isoform>
    <isoform>
        <id>Q9HD20-3</id>
        <name>C</name>
        <sequence type="described" ref="VSP_000433"/>
    </isoform>
    <text>Experimental confirmation may be lacking for some isoforms.</text>
</comment>
<comment type="domain">
    <text evidence="1">Contains a large substrate-binding pocket that recognizes alpha-helical transmembranes, which alternately faces the endoplasmic reticulum lumen and cytosol, while remaining accessible to the lipid bilayer through a lateral opening. The translocase alternates between two conformations: inward-open (E1) and outward-open (E2) states. Undergoes a series of conformational changes with ATP-binding, phosphorylation of the Asp active site and subsequent dephosphorylation in a Post-Albers cycle (i.e., E1 -&gt; E1-ATP -&gt; E1P-ADP -&gt; E1P -&gt; E2P -&gt; E2-Pi -&gt; E1). A substrate transmembrane helix with a short, preferentially positively charged lumenal segment binds to the outward-open pocket and the E2P-to-E1 transition flips the transmembrane by a switch from the outward-open to inward-open conformation.</text>
</comment>
<comment type="similarity">
    <text evidence="14">Belongs to the cation transport ATPase (P-type) (TC 3.A.3) family. Type V subfamily.</text>
</comment>
<comment type="caution">
    <text evidence="6 8">Was initially thought to mediate manganese transport (PubMed:24392018). However, it was later shown to specifically bind moderately hydrophobic transmembrane with short hydrophilic lumenal domains that misinsert into the endoplasmic reticulum (PubMed:32973005).</text>
</comment>
<comment type="sequence caution" evidence="14">
    <conflict type="frameshift">
        <sequence resource="EMBL-CDS" id="AAH69211"/>
    </conflict>
</comment>
<comment type="online information" name="Protein Spotlight">
    <link uri="https://www.proteinspotlight.org/back_issues/234/"/>
    <text>Wrong place - Issue 234 of March 2021</text>
</comment>
<feature type="initiator methionine" description="Removed" evidence="18 19">
    <location>
        <position position="1"/>
    </location>
</feature>
<feature type="chain" id="PRO_0000046421" description="Endoplasmic reticulum transmembrane helix translocase">
    <location>
        <begin position="2"/>
        <end position="1204"/>
    </location>
</feature>
<feature type="topological domain" description="Cytoplasmic" evidence="3">
    <location>
        <begin position="2"/>
        <end position="66"/>
    </location>
</feature>
<feature type="transmembrane region" description="Helical" evidence="3">
    <location>
        <begin position="67"/>
        <end position="87"/>
    </location>
</feature>
<feature type="topological domain" description="Extracellular" evidence="3">
    <location>
        <begin position="88"/>
        <end position="95"/>
    </location>
</feature>
<feature type="transmembrane region" description="Helical" evidence="3">
    <location>
        <begin position="96"/>
        <end position="116"/>
    </location>
</feature>
<feature type="topological domain" description="Cytoplasmic" evidence="3">
    <location>
        <begin position="117"/>
        <end position="243"/>
    </location>
</feature>
<feature type="transmembrane region" description="Helical" evidence="3">
    <location>
        <begin position="244"/>
        <end position="264"/>
    </location>
</feature>
<feature type="topological domain" description="Extracellular" evidence="3">
    <location>
        <begin position="265"/>
        <end position="443"/>
    </location>
</feature>
<feature type="transmembrane region" description="Helical" evidence="3">
    <location>
        <begin position="444"/>
        <end position="464"/>
    </location>
</feature>
<feature type="topological domain" description="Cytoplasmic" evidence="3">
    <location>
        <begin position="465"/>
        <end position="989"/>
    </location>
</feature>
<feature type="transmembrane region" description="Helical" evidence="3">
    <location>
        <begin position="990"/>
        <end position="1010"/>
    </location>
</feature>
<feature type="topological domain" description="Extracellular" evidence="3">
    <location>
        <position position="1011"/>
    </location>
</feature>
<feature type="transmembrane region" description="Helical" evidence="3">
    <location>
        <begin position="1012"/>
        <end position="1032"/>
    </location>
</feature>
<feature type="topological domain" description="Cytoplasmic" evidence="3">
    <location>
        <begin position="1033"/>
        <end position="1051"/>
    </location>
</feature>
<feature type="transmembrane region" description="Helical" evidence="3">
    <location>
        <begin position="1052"/>
        <end position="1072"/>
    </location>
</feature>
<feature type="topological domain" description="Extracellular" evidence="3">
    <location>
        <begin position="1073"/>
        <end position="1096"/>
    </location>
</feature>
<feature type="transmembrane region" description="Helical" evidence="3">
    <location>
        <begin position="1097"/>
        <end position="1117"/>
    </location>
</feature>
<feature type="topological domain" description="Cytoplasmic" evidence="3">
    <location>
        <begin position="1118"/>
        <end position="1132"/>
    </location>
</feature>
<feature type="transmembrane region" description="Helical" evidence="3">
    <location>
        <begin position="1133"/>
        <end position="1153"/>
    </location>
</feature>
<feature type="topological domain" description="Extracellular" evidence="3">
    <location>
        <begin position="1154"/>
        <end position="1166"/>
    </location>
</feature>
<feature type="transmembrane region" description="Helical" evidence="3">
    <location>
        <begin position="1167"/>
        <end position="1187"/>
    </location>
</feature>
<feature type="topological domain" description="Cytoplasmic" evidence="3">
    <location>
        <begin position="1188"/>
        <end position="1204"/>
    </location>
</feature>
<feature type="region of interest" description="A-domain; part 1" evidence="1">
    <location>
        <begin position="199"/>
        <end position="230"/>
    </location>
</feature>
<feature type="region of interest" description="A-domain; part 2" evidence="1">
    <location>
        <begin position="295"/>
        <end position="435"/>
    </location>
</feature>
<feature type="region of interest" description="P-domain; part 1" evidence="1">
    <location>
        <begin position="512"/>
        <end position="541"/>
    </location>
</feature>
<feature type="region of interest" description="N-domain" evidence="1">
    <location>
        <begin position="543"/>
        <end position="724"/>
    </location>
</feature>
<feature type="region of interest" description="P-domain; part 2" evidence="1">
    <location>
        <begin position="727"/>
        <end position="885"/>
    </location>
</feature>
<feature type="region of interest" description="Arm-like" evidence="1">
    <location>
        <begin position="886"/>
        <end position="949"/>
    </location>
</feature>
<feature type="region of interest" description="Disordered" evidence="4">
    <location>
        <begin position="889"/>
        <end position="933"/>
    </location>
</feature>
<feature type="region of interest" description="P-domain; part 3" evidence="1">
    <location>
        <begin position="950"/>
        <end position="965"/>
    </location>
</feature>
<feature type="compositionally biased region" description="Polar residues" evidence="4">
    <location>
        <begin position="900"/>
        <end position="913"/>
    </location>
</feature>
<feature type="active site" description="4-aspartylphosphate intermediate" evidence="15">
    <location>
        <position position="533"/>
    </location>
</feature>
<feature type="binding site" evidence="1">
    <location>
        <begin position="533"/>
        <end position="535"/>
    </location>
    <ligand>
        <name>ATP</name>
        <dbReference type="ChEBI" id="CHEBI:30616"/>
    </ligand>
</feature>
<feature type="binding site" evidence="1">
    <location>
        <position position="533"/>
    </location>
    <ligand>
        <name>Mg(2+)</name>
        <dbReference type="ChEBI" id="CHEBI:18420"/>
    </ligand>
</feature>
<feature type="binding site" evidence="1">
    <location>
        <position position="535"/>
    </location>
    <ligand>
        <name>Mg(2+)</name>
        <dbReference type="ChEBI" id="CHEBI:18420"/>
    </ligand>
</feature>
<feature type="binding site" evidence="2">
    <location>
        <position position="626"/>
    </location>
    <ligand>
        <name>ATP</name>
        <dbReference type="ChEBI" id="CHEBI:30616"/>
    </ligand>
</feature>
<feature type="binding site" evidence="1">
    <location>
        <position position="684"/>
    </location>
    <ligand>
        <name>ATP</name>
        <dbReference type="ChEBI" id="CHEBI:30616"/>
    </ligand>
</feature>
<feature type="binding site" evidence="1">
    <location>
        <position position="749"/>
    </location>
    <ligand>
        <name>ATP</name>
        <dbReference type="ChEBI" id="CHEBI:30616"/>
    </ligand>
</feature>
<feature type="binding site" evidence="1">
    <location>
        <begin position="864"/>
        <end position="868"/>
    </location>
    <ligand>
        <name>ATP</name>
        <dbReference type="ChEBI" id="CHEBI:30616"/>
    </ligand>
</feature>
<feature type="binding site" evidence="1">
    <location>
        <position position="864"/>
    </location>
    <ligand>
        <name>Mg(2+)</name>
        <dbReference type="ChEBI" id="CHEBI:18420"/>
    </ligand>
</feature>
<feature type="modified residue" description="N-acetylalanine" evidence="18 19">
    <location>
        <position position="2"/>
    </location>
</feature>
<feature type="modified residue" description="Phosphoserine" evidence="17 20 21">
    <location>
        <position position="899"/>
    </location>
</feature>
<feature type="modified residue" description="Phosphoserine" evidence="20">
    <location>
        <position position="905"/>
    </location>
</feature>
<feature type="glycosylation site" description="N-linked (GlcNAc...) asparagine" evidence="3">
    <location>
        <position position="287"/>
    </location>
</feature>
<feature type="glycosylation site" description="N-linked (GlcNAc...) asparagine" evidence="5">
    <location>
        <position position="420"/>
    </location>
</feature>
<feature type="splice variant" id="VSP_000433" description="In isoform C." evidence="11">
    <location>
        <begin position="1"/>
        <end position="860"/>
    </location>
</feature>
<feature type="splice variant" id="VSP_000434" description="In isoform B." evidence="13">
    <location>
        <begin position="1"/>
        <end position="118"/>
    </location>
</feature>
<feature type="splice variant" id="VSP_000435" description="In isoform B." evidence="13">
    <original>HWSVHAHCALTCTP</original>
    <variation>MEKWEELNSHQPGE</variation>
    <location>
        <begin position="119"/>
        <end position="132"/>
    </location>
</feature>
<feature type="sequence variant" id="VAR_084651" description="Found in a patient with intellectual disability; uncertain significance." evidence="7">
    <original>E</original>
    <variation>K</variation>
    <location>
        <position position="349"/>
    </location>
</feature>
<feature type="mutagenesis site" description="Loss of ATPase activity." evidence="8">
    <original>D</original>
    <variation>A</variation>
    <location>
        <position position="533"/>
    </location>
</feature>
<feature type="sequence conflict" description="In Ref. 2; BAD18759." evidence="14" ref="2">
    <original>I</original>
    <variation>T</variation>
    <location>
        <position position="364"/>
    </location>
</feature>
<feature type="sequence conflict" description="In Ref. 2; BAD18759." evidence="14" ref="2">
    <original>V</original>
    <variation>D</variation>
    <location>
        <position position="501"/>
    </location>
</feature>
<feature type="sequence conflict" description="In Ref. 2; BAD18759." evidence="14" ref="2">
    <original>L</original>
    <variation>P</variation>
    <location>
        <position position="1150"/>
    </location>
</feature>
<gene>
    <name evidence="12 16" type="primary">ATP13A1</name>
    <name evidence="16" type="synonym">ATP13A</name>
    <name evidence="10" type="synonym">KIAA1825</name>
    <name evidence="13" type="ORF">CGI-152</name>
</gene>
<organism>
    <name type="scientific">Homo sapiens</name>
    <name type="common">Human</name>
    <dbReference type="NCBI Taxonomy" id="9606"/>
    <lineage>
        <taxon>Eukaryota</taxon>
        <taxon>Metazoa</taxon>
        <taxon>Chordata</taxon>
        <taxon>Craniata</taxon>
        <taxon>Vertebrata</taxon>
        <taxon>Euteleostomi</taxon>
        <taxon>Mammalia</taxon>
        <taxon>Eutheria</taxon>
        <taxon>Euarchontoglires</taxon>
        <taxon>Primates</taxon>
        <taxon>Haplorrhini</taxon>
        <taxon>Catarrhini</taxon>
        <taxon>Hominidae</taxon>
        <taxon>Homo</taxon>
    </lineage>
</organism>
<proteinExistence type="evidence at protein level"/>
<accession>Q9HD20</accession>
<accession>B3KPJ2</accession>
<accession>B3KTA7</accession>
<accession>Q6NT90</accession>
<accession>Q6ZMG7</accession>
<accession>Q9H6C6</accession>
<evidence type="ECO:0000250" key="1">
    <source>
        <dbReference type="UniProtKB" id="P39986"/>
    </source>
</evidence>
<evidence type="ECO:0000250" key="2">
    <source>
        <dbReference type="UniProtKB" id="Q9Y2Q0"/>
    </source>
</evidence>
<evidence type="ECO:0000255" key="3"/>
<evidence type="ECO:0000256" key="4">
    <source>
        <dbReference type="SAM" id="MobiDB-lite"/>
    </source>
</evidence>
<evidence type="ECO:0000269" key="5">
    <source>
    </source>
</evidence>
<evidence type="ECO:0000269" key="6">
    <source>
    </source>
</evidence>
<evidence type="ECO:0000269" key="7">
    <source>
    </source>
</evidence>
<evidence type="ECO:0000269" key="8">
    <source>
    </source>
</evidence>
<evidence type="ECO:0000269" key="9">
    <source>
    </source>
</evidence>
<evidence type="ECO:0000303" key="10">
    <source>
    </source>
</evidence>
<evidence type="ECO:0000303" key="11">
    <source>
    </source>
</evidence>
<evidence type="ECO:0000303" key="12">
    <source>
    </source>
</evidence>
<evidence type="ECO:0000303" key="13">
    <source ref="1"/>
</evidence>
<evidence type="ECO:0000305" key="14"/>
<evidence type="ECO:0000305" key="15">
    <source>
    </source>
</evidence>
<evidence type="ECO:0000312" key="16">
    <source>
        <dbReference type="HGNC" id="HGNC:24215"/>
    </source>
</evidence>
<evidence type="ECO:0007744" key="17">
    <source>
    </source>
</evidence>
<evidence type="ECO:0007744" key="18">
    <source>
    </source>
</evidence>
<evidence type="ECO:0007744" key="19">
    <source>
    </source>
</evidence>
<evidence type="ECO:0007744" key="20">
    <source>
    </source>
</evidence>
<evidence type="ECO:0007744" key="21">
    <source>
    </source>
</evidence>
<protein>
    <recommendedName>
        <fullName evidence="14">Endoplasmic reticulum transmembrane helix translocase</fullName>
        <ecNumber evidence="6">7.4.2.-</ecNumber>
    </recommendedName>
    <alternativeName>
        <fullName evidence="12">Endoplasmic reticulum P5A-ATPase</fullName>
    </alternativeName>
</protein>
<reference key="1">
    <citation type="submission" date="2000-07" db="EMBL/GenBank/DDBJ databases">
        <title>Identification of novel human genes by comparative proteomics.</title>
        <authorList>
            <person name="Chou M.C.-H."/>
            <person name="Lin W.-C."/>
        </authorList>
    </citation>
    <scope>NUCLEOTIDE SEQUENCE [LARGE SCALE MRNA] (ISOFORM B)</scope>
</reference>
<reference key="2">
    <citation type="journal article" date="2004" name="Nat. Genet.">
        <title>Complete sequencing and characterization of 21,243 full-length human cDNAs.</title>
        <authorList>
            <person name="Ota T."/>
            <person name="Suzuki Y."/>
            <person name="Nishikawa T."/>
            <person name="Otsuki T."/>
            <person name="Sugiyama T."/>
            <person name="Irie R."/>
            <person name="Wakamatsu A."/>
            <person name="Hayashi K."/>
            <person name="Sato H."/>
            <person name="Nagai K."/>
            <person name="Kimura K."/>
            <person name="Makita H."/>
            <person name="Sekine M."/>
            <person name="Obayashi M."/>
            <person name="Nishi T."/>
            <person name="Shibahara T."/>
            <person name="Tanaka T."/>
            <person name="Ishii S."/>
            <person name="Yamamoto J."/>
            <person name="Saito K."/>
            <person name="Kawai Y."/>
            <person name="Isono Y."/>
            <person name="Nakamura Y."/>
            <person name="Nagahari K."/>
            <person name="Murakami K."/>
            <person name="Yasuda T."/>
            <person name="Iwayanagi T."/>
            <person name="Wagatsuma M."/>
            <person name="Shiratori A."/>
            <person name="Sudo H."/>
            <person name="Hosoiri T."/>
            <person name="Kaku Y."/>
            <person name="Kodaira H."/>
            <person name="Kondo H."/>
            <person name="Sugawara M."/>
            <person name="Takahashi M."/>
            <person name="Kanda K."/>
            <person name="Yokoi T."/>
            <person name="Furuya T."/>
            <person name="Kikkawa E."/>
            <person name="Omura Y."/>
            <person name="Abe K."/>
            <person name="Kamihara K."/>
            <person name="Katsuta N."/>
            <person name="Sato K."/>
            <person name="Tanikawa M."/>
            <person name="Yamazaki M."/>
            <person name="Ninomiya K."/>
            <person name="Ishibashi T."/>
            <person name="Yamashita H."/>
            <person name="Murakawa K."/>
            <person name="Fujimori K."/>
            <person name="Tanai H."/>
            <person name="Kimata M."/>
            <person name="Watanabe M."/>
            <person name="Hiraoka S."/>
            <person name="Chiba Y."/>
            <person name="Ishida S."/>
            <person name="Ono Y."/>
            <person name="Takiguchi S."/>
            <person name="Watanabe S."/>
            <person name="Yosida M."/>
            <person name="Hotuta T."/>
            <person name="Kusano J."/>
            <person name="Kanehori K."/>
            <person name="Takahashi-Fujii A."/>
            <person name="Hara H."/>
            <person name="Tanase T.-O."/>
            <person name="Nomura Y."/>
            <person name="Togiya S."/>
            <person name="Komai F."/>
            <person name="Hara R."/>
            <person name="Takeuchi K."/>
            <person name="Arita M."/>
            <person name="Imose N."/>
            <person name="Musashino K."/>
            <person name="Yuuki H."/>
            <person name="Oshima A."/>
            <person name="Sasaki N."/>
            <person name="Aotsuka S."/>
            <person name="Yoshikawa Y."/>
            <person name="Matsunawa H."/>
            <person name="Ichihara T."/>
            <person name="Shiohata N."/>
            <person name="Sano S."/>
            <person name="Moriya S."/>
            <person name="Momiyama H."/>
            <person name="Satoh N."/>
            <person name="Takami S."/>
            <person name="Terashima Y."/>
            <person name="Suzuki O."/>
            <person name="Nakagawa S."/>
            <person name="Senoh A."/>
            <person name="Mizoguchi H."/>
            <person name="Goto Y."/>
            <person name="Shimizu F."/>
            <person name="Wakebe H."/>
            <person name="Hishigaki H."/>
            <person name="Watanabe T."/>
            <person name="Sugiyama A."/>
            <person name="Takemoto M."/>
            <person name="Kawakami B."/>
            <person name="Yamazaki M."/>
            <person name="Watanabe K."/>
            <person name="Kumagai A."/>
            <person name="Itakura S."/>
            <person name="Fukuzumi Y."/>
            <person name="Fujimori Y."/>
            <person name="Komiyama M."/>
            <person name="Tashiro H."/>
            <person name="Tanigami A."/>
            <person name="Fujiwara T."/>
            <person name="Ono T."/>
            <person name="Yamada K."/>
            <person name="Fujii Y."/>
            <person name="Ozaki K."/>
            <person name="Hirao M."/>
            <person name="Ohmori Y."/>
            <person name="Kawabata A."/>
            <person name="Hikiji T."/>
            <person name="Kobatake N."/>
            <person name="Inagaki H."/>
            <person name="Ikema Y."/>
            <person name="Okamoto S."/>
            <person name="Okitani R."/>
            <person name="Kawakami T."/>
            <person name="Noguchi S."/>
            <person name="Itoh T."/>
            <person name="Shigeta K."/>
            <person name="Senba T."/>
            <person name="Matsumura K."/>
            <person name="Nakajima Y."/>
            <person name="Mizuno T."/>
            <person name="Morinaga M."/>
            <person name="Sasaki M."/>
            <person name="Togashi T."/>
            <person name="Oyama M."/>
            <person name="Hata H."/>
            <person name="Watanabe M."/>
            <person name="Komatsu T."/>
            <person name="Mizushima-Sugano J."/>
            <person name="Satoh T."/>
            <person name="Shirai Y."/>
            <person name="Takahashi Y."/>
            <person name="Nakagawa K."/>
            <person name="Okumura K."/>
            <person name="Nagase T."/>
            <person name="Nomura N."/>
            <person name="Kikuchi H."/>
            <person name="Masuho Y."/>
            <person name="Yamashita R."/>
            <person name="Nakai K."/>
            <person name="Yada T."/>
            <person name="Nakamura Y."/>
            <person name="Ohara O."/>
            <person name="Isogai T."/>
            <person name="Sugano S."/>
        </authorList>
    </citation>
    <scope>NUCLEOTIDE SEQUENCE [LARGE SCALE MRNA] (ISOFORMS A AND C)</scope>
    <source>
        <tissue>Hepatoma</tissue>
        <tissue>Kidney epithelium</tissue>
    </source>
</reference>
<reference key="3">
    <citation type="submission" date="2005-07" db="EMBL/GenBank/DDBJ databases">
        <authorList>
            <person name="Mural R.J."/>
            <person name="Istrail S."/>
            <person name="Sutton G.G."/>
            <person name="Florea L."/>
            <person name="Halpern A.L."/>
            <person name="Mobarry C.M."/>
            <person name="Lippert R."/>
            <person name="Walenz B."/>
            <person name="Shatkay H."/>
            <person name="Dew I."/>
            <person name="Miller J.R."/>
            <person name="Flanigan M.J."/>
            <person name="Edwards N.J."/>
            <person name="Bolanos R."/>
            <person name="Fasulo D."/>
            <person name="Halldorsson B.V."/>
            <person name="Hannenhalli S."/>
            <person name="Turner R."/>
            <person name="Yooseph S."/>
            <person name="Lu F."/>
            <person name="Nusskern D.R."/>
            <person name="Shue B.C."/>
            <person name="Zheng X.H."/>
            <person name="Zhong F."/>
            <person name="Delcher A.L."/>
            <person name="Huson D.H."/>
            <person name="Kravitz S.A."/>
            <person name="Mouchard L."/>
            <person name="Reinert K."/>
            <person name="Remington K.A."/>
            <person name="Clark A.G."/>
            <person name="Waterman M.S."/>
            <person name="Eichler E.E."/>
            <person name="Adams M.D."/>
            <person name="Hunkapiller M.W."/>
            <person name="Myers E.W."/>
            <person name="Venter J.C."/>
        </authorList>
    </citation>
    <scope>NUCLEOTIDE SEQUENCE [LARGE SCALE GENOMIC DNA]</scope>
</reference>
<reference key="4">
    <citation type="journal article" date="2001" name="DNA Res.">
        <title>Prediction of the coding sequences of unidentified human genes. XX. The complete sequences of 100 new cDNA clones from brain which code for large proteins in vitro.</title>
        <authorList>
            <person name="Nagase T."/>
            <person name="Nakayama M."/>
            <person name="Nakajima D."/>
            <person name="Kikuno R."/>
            <person name="Ohara O."/>
        </authorList>
    </citation>
    <scope>NUCLEOTIDE SEQUENCE [LARGE SCALE MRNA] OF 2-1204 (ISOFORM A)</scope>
    <source>
        <tissue>Brain</tissue>
    </source>
</reference>
<reference key="5">
    <citation type="journal article" date="2004" name="Genome Res.">
        <title>The status, quality, and expansion of the NIH full-length cDNA project: the Mammalian Gene Collection (MGC).</title>
        <authorList>
            <consortium name="The MGC Project Team"/>
        </authorList>
    </citation>
    <scope>NUCLEOTIDE SEQUENCE [LARGE SCALE MRNA] OF 844-1204</scope>
    <source>
        <tissue>Brain</tissue>
        <tissue>Kidney</tissue>
    </source>
</reference>
<reference key="6">
    <citation type="journal article" date="2005" name="J. Proteome Res.">
        <title>Human plasma N-glycoproteome analysis by immunoaffinity subtraction, hydrazide chemistry, and mass spectrometry.</title>
        <authorList>
            <person name="Liu T."/>
            <person name="Qian W.-J."/>
            <person name="Gritsenko M.A."/>
            <person name="Camp D.G. II"/>
            <person name="Monroe M.E."/>
            <person name="Moore R.J."/>
            <person name="Smith R.D."/>
        </authorList>
    </citation>
    <scope>GLYCOSYLATION [LARGE SCALE ANALYSIS] AT ASN-420</scope>
    <source>
        <tissue>Plasma</tissue>
    </source>
</reference>
<reference key="7">
    <citation type="journal article" date="2008" name="Proc. Natl. Acad. Sci. U.S.A.">
        <title>A quantitative atlas of mitotic phosphorylation.</title>
        <authorList>
            <person name="Dephoure N."/>
            <person name="Zhou C."/>
            <person name="Villen J."/>
            <person name="Beausoleil S.A."/>
            <person name="Bakalarski C.E."/>
            <person name="Elledge S.J."/>
            <person name="Gygi S.P."/>
        </authorList>
    </citation>
    <scope>PHOSPHORYLATION [LARGE SCALE ANALYSIS] AT SER-899</scope>
    <scope>IDENTIFICATION BY MASS SPECTROMETRY [LARGE SCALE ANALYSIS]</scope>
    <source>
        <tissue>Cervix carcinoma</tissue>
    </source>
</reference>
<reference key="8">
    <citation type="journal article" date="2010" name="Sci. Signal.">
        <title>Quantitative phosphoproteomics reveals widespread full phosphorylation site occupancy during mitosis.</title>
        <authorList>
            <person name="Olsen J.V."/>
            <person name="Vermeulen M."/>
            <person name="Santamaria A."/>
            <person name="Kumar C."/>
            <person name="Miller M.L."/>
            <person name="Jensen L.J."/>
            <person name="Gnad F."/>
            <person name="Cox J."/>
            <person name="Jensen T.S."/>
            <person name="Nigg E.A."/>
            <person name="Brunak S."/>
            <person name="Mann M."/>
        </authorList>
    </citation>
    <scope>IDENTIFICATION BY MASS SPECTROMETRY [LARGE SCALE ANALYSIS]</scope>
    <source>
        <tissue>Cervix carcinoma</tissue>
    </source>
</reference>
<reference key="9">
    <citation type="journal article" date="2011" name="BMC Syst. Biol.">
        <title>Initial characterization of the human central proteome.</title>
        <authorList>
            <person name="Burkard T.R."/>
            <person name="Planyavsky M."/>
            <person name="Kaupe I."/>
            <person name="Breitwieser F.P."/>
            <person name="Buerckstuemmer T."/>
            <person name="Bennett K.L."/>
            <person name="Superti-Furga G."/>
            <person name="Colinge J."/>
        </authorList>
    </citation>
    <scope>IDENTIFICATION BY MASS SPECTROMETRY [LARGE SCALE ANALYSIS]</scope>
</reference>
<reference key="10">
    <citation type="journal article" date="2012" name="Mol. Cell. Proteomics">
        <title>Comparative large-scale characterisation of plant vs. mammal proteins reveals similar and idiosyncratic N-alpha acetylation features.</title>
        <authorList>
            <person name="Bienvenut W.V."/>
            <person name="Sumpton D."/>
            <person name="Martinez A."/>
            <person name="Lilla S."/>
            <person name="Espagne C."/>
            <person name="Meinnel T."/>
            <person name="Giglione C."/>
        </authorList>
    </citation>
    <scope>ACETYLATION [LARGE SCALE ANALYSIS] AT ALA-2</scope>
    <scope>CLEAVAGE OF INITIATOR METHIONINE [LARGE SCALE ANALYSIS]</scope>
    <scope>IDENTIFICATION BY MASS SPECTROMETRY [LARGE SCALE ANALYSIS]</scope>
</reference>
<reference key="11">
    <citation type="journal article" date="2012" name="Proc. Natl. Acad. Sci. U.S.A.">
        <title>N-terminal acetylome analyses and functional insights of the N-terminal acetyltransferase NatB.</title>
        <authorList>
            <person name="Van Damme P."/>
            <person name="Lasa M."/>
            <person name="Polevoda B."/>
            <person name="Gazquez C."/>
            <person name="Elosegui-Artola A."/>
            <person name="Kim D.S."/>
            <person name="De Juan-Pardo E."/>
            <person name="Demeyer K."/>
            <person name="Hole K."/>
            <person name="Larrea E."/>
            <person name="Timmerman E."/>
            <person name="Prieto J."/>
            <person name="Arnesen T."/>
            <person name="Sherman F."/>
            <person name="Gevaert K."/>
            <person name="Aldabe R."/>
        </authorList>
    </citation>
    <scope>ACETYLATION [LARGE SCALE ANALYSIS] AT ALA-2</scope>
    <scope>CLEAVAGE OF INITIATOR METHIONINE [LARGE SCALE ANALYSIS]</scope>
    <scope>IDENTIFICATION BY MASS SPECTROMETRY [LARGE SCALE ANALYSIS]</scope>
</reference>
<reference key="12">
    <citation type="journal article" date="2013" name="J. Proteome Res.">
        <title>Toward a comprehensive characterization of a human cancer cell phosphoproteome.</title>
        <authorList>
            <person name="Zhou H."/>
            <person name="Di Palma S."/>
            <person name="Preisinger C."/>
            <person name="Peng M."/>
            <person name="Polat A.N."/>
            <person name="Heck A.J."/>
            <person name="Mohammed S."/>
        </authorList>
    </citation>
    <scope>PHOSPHORYLATION [LARGE SCALE ANALYSIS] AT SER-899 AND SER-905</scope>
    <scope>IDENTIFICATION BY MASS SPECTROMETRY [LARGE SCALE ANALYSIS]</scope>
    <source>
        <tissue>Cervix carcinoma</tissue>
        <tissue>Erythroleukemia</tissue>
    </source>
</reference>
<reference key="13">
    <citation type="journal article" date="2013" name="PLoS ONE">
        <title>The yeast p5 type ATPase, spf1, regulates manganese transport into the endoplasmic reticulum.</title>
        <authorList>
            <person name="Cohen Y."/>
            <person name="Megyeri M."/>
            <person name="Chen O.C."/>
            <person name="Condomitti G."/>
            <person name="Riezman I."/>
            <person name="Loizides-Mangold U."/>
            <person name="Abdul-Sada A."/>
            <person name="Rimon N."/>
            <person name="Riezman H."/>
            <person name="Platt F.M."/>
            <person name="Futerman A.H."/>
            <person name="Schuldiner M."/>
        </authorList>
    </citation>
    <scope>SUBCELLULAR LOCATION</scope>
</reference>
<reference key="14">
    <citation type="journal article" date="2014" name="J. Proteomics">
        <title>An enzyme assisted RP-RPLC approach for in-depth analysis of human liver phosphoproteome.</title>
        <authorList>
            <person name="Bian Y."/>
            <person name="Song C."/>
            <person name="Cheng K."/>
            <person name="Dong M."/>
            <person name="Wang F."/>
            <person name="Huang J."/>
            <person name="Sun D."/>
            <person name="Wang L."/>
            <person name="Ye M."/>
            <person name="Zou H."/>
        </authorList>
    </citation>
    <scope>PHOSPHORYLATION [LARGE SCALE ANALYSIS] AT SER-899</scope>
    <scope>IDENTIFICATION BY MASS SPECTROMETRY [LARGE SCALE ANALYSIS]</scope>
    <source>
        <tissue>Liver</tissue>
    </source>
</reference>
<reference key="15">
    <citation type="journal article" date="2015" name="Proteomics">
        <title>N-terminome analysis of the human mitochondrial proteome.</title>
        <authorList>
            <person name="Vaca Jacome A.S."/>
            <person name="Rabilloud T."/>
            <person name="Schaeffer-Reiss C."/>
            <person name="Rompais M."/>
            <person name="Ayoub D."/>
            <person name="Lane L."/>
            <person name="Bairoch A."/>
            <person name="Van Dorsselaer A."/>
            <person name="Carapito C."/>
        </authorList>
    </citation>
    <scope>IDENTIFICATION BY MASS SPECTROMETRY [LARGE SCALE ANALYSIS]</scope>
</reference>
<reference key="16">
    <citation type="journal article" date="2020" name="Science">
        <title>The endoplasmic reticulum P5A-ATPase is a transmembrane helix dislocase.</title>
        <authorList>
            <person name="McKenna M.J."/>
            <person name="Sim S.I."/>
            <person name="Ordureau A."/>
            <person name="Wei L."/>
            <person name="Harper J.W."/>
            <person name="Shao S."/>
            <person name="Park E."/>
        </authorList>
    </citation>
    <scope>FUNCTION</scope>
    <scope>CATALYTIC ACTIVITY</scope>
    <scope>ACTIVE SITE</scope>
    <scope>MUTAGENESIS OF ASP-533</scope>
</reference>
<reference key="17">
    <citation type="journal article" date="2022" name="Science">
        <title>MTCH2 is a mitochondrial outer membrane protein insertase.</title>
        <authorList>
            <person name="Guna A."/>
            <person name="Stevens T.A."/>
            <person name="Inglis A.J."/>
            <person name="Replogle J.M."/>
            <person name="Esantsi T.K."/>
            <person name="Muthukumar G."/>
            <person name="Shaffer K.C.L."/>
            <person name="Wang M.L."/>
            <person name="Pogson A.N."/>
            <person name="Jones J.J."/>
            <person name="Lomenick B."/>
            <person name="Chou T.F."/>
            <person name="Weissman J.S."/>
            <person name="Voorhees R.M."/>
        </authorList>
    </citation>
    <scope>FUNCTION</scope>
</reference>
<reference key="18">
    <citation type="journal article" date="2017" name="Hum. Genet.">
        <title>Expanding the genetic heterogeneity of intellectual disability.</title>
        <authorList>
            <person name="Anazi S."/>
            <person name="Maddirevula S."/>
            <person name="Salpietro V."/>
            <person name="Asi Y.T."/>
            <person name="Alsahli S."/>
            <person name="Alhashem A."/>
            <person name="Shamseldin H.E."/>
            <person name="AlZahrani F."/>
            <person name="Patel N."/>
            <person name="Ibrahim N."/>
            <person name="Abdulwahab F.M."/>
            <person name="Hashem M."/>
            <person name="Alhashmi N."/>
            <person name="Al Murshedi F."/>
            <person name="Al Kindy A."/>
            <person name="Alshaer A."/>
            <person name="Rumayyan A."/>
            <person name="Al Tala S."/>
            <person name="Kurdi W."/>
            <person name="Alsaman A."/>
            <person name="Alasmari A."/>
            <person name="Banu S."/>
            <person name="Sultan T."/>
            <person name="Saleh M.M."/>
            <person name="Alkuraya H."/>
            <person name="Salih M.A."/>
            <person name="Aldhalaan H."/>
            <person name="Ben-Omran T."/>
            <person name="Al Musafri F."/>
            <person name="Ali R."/>
            <person name="Suleiman J."/>
            <person name="Tabarki B."/>
            <person name="El-Hattab A.W."/>
            <person name="Bupp C."/>
            <person name="Alfadhel M."/>
            <person name="Al Tassan N."/>
            <person name="Monies D."/>
            <person name="Arold S.T."/>
            <person name="Abouelhoda M."/>
            <person name="Lashley T."/>
            <person name="Houlden H."/>
            <person name="Faqeih E."/>
            <person name="Alkuraya F.S."/>
        </authorList>
    </citation>
    <scope>VARIANT LYS-349</scope>
</reference>
<reference key="19">
    <citation type="journal article" date="2018" name="Hum. Genet.">
        <title>Correction to: Expanding the genetic heterogeneity of intellectual disability.</title>
        <authorList>
            <person name="Anazi S."/>
            <person name="Maddirevula S."/>
            <person name="Salpietro V."/>
            <person name="Asi Y.T."/>
            <person name="Alsahli S."/>
            <person name="Alhashem A."/>
            <person name="Shamseldin H.E."/>
            <person name="AlZahrani F."/>
            <person name="Patel N."/>
            <person name="Ibrahim N."/>
            <person name="Abdulwahab F.M."/>
            <person name="Hashem M."/>
            <person name="Alhashmi N."/>
            <person name="Al Murshedi F."/>
            <person name="Al Kindy A."/>
            <person name="Alshaer A."/>
            <person name="Rumayyan A."/>
            <person name="Al Tala S."/>
            <person name="Kurdi W."/>
            <person name="Alsaman A."/>
            <person name="Alasmari A."/>
            <person name="Banu S."/>
            <person name="Sultan T."/>
            <person name="Saleh M.M."/>
            <person name="Alkuraya H."/>
            <person name="Salih M.A."/>
            <person name="Aldhalaan H."/>
            <person name="Ben-Omran T."/>
            <person name="Al Musafri F."/>
            <person name="Ali R."/>
            <person name="Suleiman J."/>
            <person name="Tabarki B."/>
            <person name="El-Hattab A.W."/>
            <person name="Bupp C."/>
            <person name="Alfadhel M."/>
            <person name="Al Tassan N."/>
            <person name="Monies D."/>
            <person name="Arold S.T."/>
            <person name="Abouelhoda M."/>
            <person name="Lashley T."/>
            <person name="Houlden H."/>
            <person name="Faqeih E."/>
            <person name="Alkuraya F.S."/>
        </authorList>
    </citation>
    <scope>ERRATUM OF PUBMED:28940097</scope>
</reference>
<name>AT131_HUMAN</name>
<keyword id="KW-0007">Acetylation</keyword>
<keyword id="KW-0025">Alternative splicing</keyword>
<keyword id="KW-0067">ATP-binding</keyword>
<keyword id="KW-0256">Endoplasmic reticulum</keyword>
<keyword id="KW-0325">Glycoprotein</keyword>
<keyword id="KW-0460">Magnesium</keyword>
<keyword id="KW-0472">Membrane</keyword>
<keyword id="KW-0479">Metal-binding</keyword>
<keyword id="KW-0547">Nucleotide-binding</keyword>
<keyword id="KW-0597">Phosphoprotein</keyword>
<keyword id="KW-0653">Protein transport</keyword>
<keyword id="KW-1267">Proteomics identification</keyword>
<keyword id="KW-1185">Reference proteome</keyword>
<keyword id="KW-1278">Translocase</keyword>
<keyword id="KW-0812">Transmembrane</keyword>
<keyword id="KW-1133">Transmembrane helix</keyword>
<keyword id="KW-0813">Transport</keyword>
<sequence length="1204" mass="132955">MAAAAAVGNAVPCGARPCGVRPDGQPKPGPQPRALLAAGPALIANGDELVAAVWPYRRLALLRRLTVLPFAGLLYPAWLGAAAAGCWGWGSSWVQIPEAALLVLATICLAHALTVLSGHWSVHAHCALTCTPEYDPSKATFVKVVPTPNNGSTELVALHRNEGEDGLEVLSFEFQKIKYSYDALEKKQFLPVAFPVGNAFSYYQSNRGFQEDSEIRAAEKKFGSNKAEMVVPDFSELFKERATAPFFVFQVFCVGLWCLDEYWYYSVFTLSMLVAFEASLVQQQMRNMSEIRKMGNKPHMIQVYRSRKWRPIASDEIVPGDIVSIGRSPQENLVPCDVLLLRGRCIVDEAMLTGESVPQMKEPIEDLSPDRVLDLQADSRLHVIFGGTKVVQHIPPQKATTGLKPVDSGCVAYVLRTGFNTSQGKLLRTILFGVKRVTANNLETFIFILFLLVFAIAAAAYVWIEGTKDPSRNRYKLFLECTLILTSVVPPELPIELSLAVNTSLIALAKLYMYCTEPFRIPFAGKVEVCCFDKTGTLTSDSLVVRGVAGLRDGKEVTPVSSIPVETHRALASCHSLMQLDDGTLVGDPLEKAMLTAVDWTLTKDEKVFPRSIKTQGLKIHQRFHFASALKRMSVLASYEKLGSTDLCYIAAVKGAPETLHSMFSQCPPDYHHIHTEISREGARVLALGYKELGHLTHQQAREVKREALECSLKFVGFIVVSCPLKADSKAVIREIQNASHRVVMITGDNPLTACHVAQELHFIEKAHTLILQPPSEKGRQCEWRSIDGSIVLPLARGSPKALALEYALCLTGDGLAHLQATDPQQLLRLIPHVQVFARVAPKQKEFVITSLKELGYVTLMCGDGTNDVGALKHADVGVALLANAPERVVERRRRPRDSPTLSNSGIRATSRTAKQRSGLPPSEEQPTSQRDRLSQVLRDLEDESTPIVKLGDASIAAPFTSKLSSIQCICHVIKQGRCTLVTTLQMFKILALNALILAYSQSVLYLEGVKFSDFQATLQGLLLAGCFLFISRSKPLKTLSRERPLPNIFNLYTILTVMLQFFVHFLSLVYLYREAQARSPEKQEQFVDLYKEFEPSLVNSTVYIMAMAMQMATFAINYKGPPFMESLPENKPLVWSLAVSLLAIIGLLLGSSPDFNSQFGLVDIPVEFKLVIAQVLLLDFCLALLADRVLQFFLGTPKLKVPS</sequence>
<dbReference type="EC" id="7.4.2.-" evidence="6"/>
<dbReference type="EMBL" id="AF288687">
    <property type="protein sequence ID" value="AAG01173.1"/>
    <property type="molecule type" value="mRNA"/>
</dbReference>
<dbReference type="EMBL" id="AK026044">
    <property type="protein sequence ID" value="BAB15334.1"/>
    <property type="molecule type" value="mRNA"/>
</dbReference>
<dbReference type="EMBL" id="AK056420">
    <property type="protein sequence ID" value="BAG51704.1"/>
    <property type="molecule type" value="mRNA"/>
</dbReference>
<dbReference type="EMBL" id="AK095287">
    <property type="protein sequence ID" value="BAG53019.1"/>
    <property type="molecule type" value="mRNA"/>
</dbReference>
<dbReference type="EMBL" id="AK172778">
    <property type="protein sequence ID" value="BAD18759.1"/>
    <property type="molecule type" value="mRNA"/>
</dbReference>
<dbReference type="EMBL" id="AB058728">
    <property type="protein sequence ID" value="BAB47454.1"/>
    <property type="molecule type" value="mRNA"/>
</dbReference>
<dbReference type="EMBL" id="CH471106">
    <property type="protein sequence ID" value="EAW84849.1"/>
    <property type="molecule type" value="Genomic_DNA"/>
</dbReference>
<dbReference type="EMBL" id="CH471106">
    <property type="protein sequence ID" value="EAW84850.1"/>
    <property type="molecule type" value="Genomic_DNA"/>
</dbReference>
<dbReference type="EMBL" id="BC009302">
    <property type="protein sequence ID" value="AAH09302.2"/>
    <property type="molecule type" value="mRNA"/>
</dbReference>
<dbReference type="EMBL" id="BC069211">
    <property type="protein sequence ID" value="AAH69211.1"/>
    <property type="status" value="ALT_FRAME"/>
    <property type="molecule type" value="mRNA"/>
</dbReference>
<dbReference type="CCDS" id="CCDS32970.2">
    <molecule id="Q9HD20-1"/>
</dbReference>
<dbReference type="RefSeq" id="NP_065143.2">
    <molecule id="Q9HD20-1"/>
    <property type="nucleotide sequence ID" value="NM_020410.3"/>
</dbReference>
<dbReference type="SMR" id="Q9HD20"/>
<dbReference type="BioGRID" id="121393">
    <property type="interactions" value="235"/>
</dbReference>
<dbReference type="FunCoup" id="Q9HD20">
    <property type="interactions" value="2666"/>
</dbReference>
<dbReference type="IntAct" id="Q9HD20">
    <property type="interactions" value="115"/>
</dbReference>
<dbReference type="MINT" id="Q9HD20"/>
<dbReference type="STRING" id="9606.ENSP00000349877"/>
<dbReference type="TCDB" id="3.A.3.10.19">
    <property type="family name" value="the p-type atpase (p-atpase) superfamily"/>
</dbReference>
<dbReference type="CarbonylDB" id="Q9HD20"/>
<dbReference type="GlyCosmos" id="Q9HD20">
    <property type="glycosylation" value="3 sites, 1 glycan"/>
</dbReference>
<dbReference type="GlyGen" id="Q9HD20">
    <property type="glycosylation" value="4 sites, 1 N-linked glycan (1 site), 1 O-linked glycan (1 site)"/>
</dbReference>
<dbReference type="iPTMnet" id="Q9HD20"/>
<dbReference type="PhosphoSitePlus" id="Q9HD20"/>
<dbReference type="SwissPalm" id="Q9HD20"/>
<dbReference type="BioMuta" id="ATP13A1"/>
<dbReference type="DMDM" id="18202961"/>
<dbReference type="jPOST" id="Q9HD20"/>
<dbReference type="MassIVE" id="Q9HD20"/>
<dbReference type="PaxDb" id="9606-ENSP00000349877"/>
<dbReference type="PeptideAtlas" id="Q9HD20"/>
<dbReference type="ProteomicsDB" id="81811">
    <molecule id="Q9HD20-1"/>
</dbReference>
<dbReference type="ProteomicsDB" id="81812">
    <molecule id="Q9HD20-2"/>
</dbReference>
<dbReference type="ProteomicsDB" id="81813">
    <molecule id="Q9HD20-3"/>
</dbReference>
<dbReference type="Pumba" id="Q9HD20"/>
<dbReference type="Antibodypedia" id="28529">
    <property type="antibodies" value="81 antibodies from 26 providers"/>
</dbReference>
<dbReference type="DNASU" id="57130"/>
<dbReference type="Ensembl" id="ENST00000291503.9">
    <molecule id="Q9HD20-2"/>
    <property type="protein sequence ID" value="ENSP00000291503.5"/>
    <property type="gene ID" value="ENSG00000105726.17"/>
</dbReference>
<dbReference type="Ensembl" id="ENST00000357324.11">
    <molecule id="Q9HD20-1"/>
    <property type="protein sequence ID" value="ENSP00000349877.6"/>
    <property type="gene ID" value="ENSG00000105726.17"/>
</dbReference>
<dbReference type="GeneID" id="57130"/>
<dbReference type="KEGG" id="hsa:57130"/>
<dbReference type="MANE-Select" id="ENST00000357324.11">
    <property type="protein sequence ID" value="ENSP00000349877.6"/>
    <property type="RefSeq nucleotide sequence ID" value="NM_020410.3"/>
    <property type="RefSeq protein sequence ID" value="NP_065143.2"/>
</dbReference>
<dbReference type="UCSC" id="uc002nng.4">
    <molecule id="Q9HD20-1"/>
    <property type="organism name" value="human"/>
</dbReference>
<dbReference type="AGR" id="HGNC:24215"/>
<dbReference type="CTD" id="57130"/>
<dbReference type="DisGeNET" id="57130"/>
<dbReference type="GeneCards" id="ATP13A1"/>
<dbReference type="HGNC" id="HGNC:24215">
    <property type="gene designation" value="ATP13A1"/>
</dbReference>
<dbReference type="HPA" id="ENSG00000105726">
    <property type="expression patterns" value="Low tissue specificity"/>
</dbReference>
<dbReference type="MIM" id="619118">
    <property type="type" value="gene"/>
</dbReference>
<dbReference type="neXtProt" id="NX_Q9HD20"/>
<dbReference type="OpenTargets" id="ENSG00000105726"/>
<dbReference type="PharmGKB" id="PA134988892"/>
<dbReference type="VEuPathDB" id="HostDB:ENSG00000105726"/>
<dbReference type="eggNOG" id="KOG0209">
    <property type="taxonomic scope" value="Eukaryota"/>
</dbReference>
<dbReference type="GeneTree" id="ENSGT00550000075064"/>
<dbReference type="HOGENOM" id="CLU_001828_4_1_1"/>
<dbReference type="InParanoid" id="Q9HD20"/>
<dbReference type="OMA" id="QKTKYVW"/>
<dbReference type="OrthoDB" id="48943at2759"/>
<dbReference type="PAN-GO" id="Q9HD20">
    <property type="GO annotations" value="7 GO annotations based on evolutionary models"/>
</dbReference>
<dbReference type="PhylomeDB" id="Q9HD20"/>
<dbReference type="TreeFam" id="TF300725"/>
<dbReference type="PathwayCommons" id="Q9HD20"/>
<dbReference type="Reactome" id="R-HSA-936837">
    <property type="pathway name" value="Ion transport by P-type ATPases"/>
</dbReference>
<dbReference type="SignaLink" id="Q9HD20"/>
<dbReference type="SIGNOR" id="Q9HD20"/>
<dbReference type="BioGRID-ORCS" id="57130">
    <property type="hits" value="118 hits in 1168 CRISPR screens"/>
</dbReference>
<dbReference type="CD-CODE" id="FB4E32DD">
    <property type="entry name" value="Presynaptic clusters and postsynaptic densities"/>
</dbReference>
<dbReference type="ChiTaRS" id="ATP13A1">
    <property type="organism name" value="human"/>
</dbReference>
<dbReference type="GenomeRNAi" id="57130"/>
<dbReference type="Pharos" id="Q9HD20">
    <property type="development level" value="Tbio"/>
</dbReference>
<dbReference type="PRO" id="PR:Q9HD20"/>
<dbReference type="Proteomes" id="UP000005640">
    <property type="component" value="Chromosome 19"/>
</dbReference>
<dbReference type="RNAct" id="Q9HD20">
    <property type="molecule type" value="protein"/>
</dbReference>
<dbReference type="Bgee" id="ENSG00000105726">
    <property type="expression patterns" value="Expressed in granulocyte and 177 other cell types or tissues"/>
</dbReference>
<dbReference type="ExpressionAtlas" id="Q9HD20">
    <property type="expression patterns" value="baseline and differential"/>
</dbReference>
<dbReference type="GO" id="GO:0005789">
    <property type="term" value="C:endoplasmic reticulum membrane"/>
    <property type="evidence" value="ECO:0000250"/>
    <property type="project" value="UniProtKB"/>
</dbReference>
<dbReference type="GO" id="GO:0016020">
    <property type="term" value="C:membrane"/>
    <property type="evidence" value="ECO:0007005"/>
    <property type="project" value="UniProtKB"/>
</dbReference>
<dbReference type="GO" id="GO:0015410">
    <property type="term" value="F:ABC-type manganese transporter activity"/>
    <property type="evidence" value="ECO:0000304"/>
    <property type="project" value="Reactome"/>
</dbReference>
<dbReference type="GO" id="GO:0005524">
    <property type="term" value="F:ATP binding"/>
    <property type="evidence" value="ECO:0007669"/>
    <property type="project" value="UniProtKB-KW"/>
</dbReference>
<dbReference type="GO" id="GO:0016887">
    <property type="term" value="F:ATP hydrolysis activity"/>
    <property type="evidence" value="ECO:0007669"/>
    <property type="project" value="InterPro"/>
</dbReference>
<dbReference type="GO" id="GO:0019829">
    <property type="term" value="F:ATPase-coupled monoatomic cation transmembrane transporter activity"/>
    <property type="evidence" value="ECO:0000318"/>
    <property type="project" value="GO_Central"/>
</dbReference>
<dbReference type="GO" id="GO:0140567">
    <property type="term" value="F:membrane protein dislocase activity"/>
    <property type="evidence" value="ECO:0000314"/>
    <property type="project" value="UniProtKB"/>
</dbReference>
<dbReference type="GO" id="GO:0046872">
    <property type="term" value="F:metal ion binding"/>
    <property type="evidence" value="ECO:0007669"/>
    <property type="project" value="UniProtKB-KW"/>
</dbReference>
<dbReference type="GO" id="GO:0015662">
    <property type="term" value="F:P-type ion transporter activity"/>
    <property type="evidence" value="ECO:0000318"/>
    <property type="project" value="GO_Central"/>
</dbReference>
<dbReference type="GO" id="GO:0140569">
    <property type="term" value="P:extraction of mislocalized protein from ER membrane"/>
    <property type="evidence" value="ECO:0000314"/>
    <property type="project" value="UniProtKB"/>
</dbReference>
<dbReference type="GO" id="GO:0006874">
    <property type="term" value="P:intracellular calcium ion homeostasis"/>
    <property type="evidence" value="ECO:0000318"/>
    <property type="project" value="GO_Central"/>
</dbReference>
<dbReference type="GO" id="GO:0034220">
    <property type="term" value="P:monoatomic ion transmembrane transport"/>
    <property type="evidence" value="ECO:0000304"/>
    <property type="project" value="Reactome"/>
</dbReference>
<dbReference type="GO" id="GO:0015031">
    <property type="term" value="P:protein transport"/>
    <property type="evidence" value="ECO:0007669"/>
    <property type="project" value="UniProtKB-KW"/>
</dbReference>
<dbReference type="GO" id="GO:0055085">
    <property type="term" value="P:transmembrane transport"/>
    <property type="evidence" value="ECO:0000318"/>
    <property type="project" value="GO_Central"/>
</dbReference>
<dbReference type="CDD" id="cd07543">
    <property type="entry name" value="P-type_ATPase_cation"/>
    <property type="match status" value="1"/>
</dbReference>
<dbReference type="FunFam" id="2.70.150.10:FF:000015">
    <property type="entry name" value="Cation-transporting ATPase"/>
    <property type="match status" value="1"/>
</dbReference>
<dbReference type="FunFam" id="3.40.1110.10:FF:000014">
    <property type="entry name" value="Cation-transporting ATPase"/>
    <property type="match status" value="1"/>
</dbReference>
<dbReference type="FunFam" id="3.40.50.1000:FF:000056">
    <property type="entry name" value="Cation-transporting ATPase"/>
    <property type="match status" value="1"/>
</dbReference>
<dbReference type="Gene3D" id="3.40.1110.10">
    <property type="entry name" value="Calcium-transporting ATPase, cytoplasmic domain N"/>
    <property type="match status" value="1"/>
</dbReference>
<dbReference type="Gene3D" id="2.70.150.10">
    <property type="entry name" value="Calcium-transporting ATPase, cytoplasmic transduction domain A"/>
    <property type="match status" value="1"/>
</dbReference>
<dbReference type="Gene3D" id="3.40.50.1000">
    <property type="entry name" value="HAD superfamily/HAD-like"/>
    <property type="match status" value="1"/>
</dbReference>
<dbReference type="InterPro" id="IPR057255">
    <property type="entry name" value="2TM_P5A-ATPase"/>
</dbReference>
<dbReference type="InterPro" id="IPR023299">
    <property type="entry name" value="ATPase_P-typ_cyto_dom_N"/>
</dbReference>
<dbReference type="InterPro" id="IPR018303">
    <property type="entry name" value="ATPase_P-typ_P_site"/>
</dbReference>
<dbReference type="InterPro" id="IPR023298">
    <property type="entry name" value="ATPase_P-typ_TM_dom_sf"/>
</dbReference>
<dbReference type="InterPro" id="IPR008250">
    <property type="entry name" value="ATPase_P-typ_transduc_dom_A_sf"/>
</dbReference>
<dbReference type="InterPro" id="IPR036412">
    <property type="entry name" value="HAD-like_sf"/>
</dbReference>
<dbReference type="InterPro" id="IPR023214">
    <property type="entry name" value="HAD_sf"/>
</dbReference>
<dbReference type="InterPro" id="IPR006544">
    <property type="entry name" value="P-type_TPase_V"/>
</dbReference>
<dbReference type="InterPro" id="IPR047820">
    <property type="entry name" value="P5A-type_ATPase"/>
</dbReference>
<dbReference type="InterPro" id="IPR001757">
    <property type="entry name" value="P_typ_ATPase"/>
</dbReference>
<dbReference type="InterPro" id="IPR044492">
    <property type="entry name" value="P_typ_ATPase_HD_dom"/>
</dbReference>
<dbReference type="NCBIfam" id="TIGR01494">
    <property type="entry name" value="ATPase_P-type"/>
    <property type="match status" value="2"/>
</dbReference>
<dbReference type="NCBIfam" id="TIGR01657">
    <property type="entry name" value="P-ATPase-V"/>
    <property type="match status" value="1"/>
</dbReference>
<dbReference type="PANTHER" id="PTHR45630">
    <property type="entry name" value="CATION-TRANSPORTING ATPASE-RELATED"/>
    <property type="match status" value="1"/>
</dbReference>
<dbReference type="PANTHER" id="PTHR45630:SF7">
    <property type="entry name" value="ENDOPLASMIC RETICULUM TRANSMEMBRANE HELIX TRANSLOCASE"/>
    <property type="match status" value="1"/>
</dbReference>
<dbReference type="Pfam" id="PF23143">
    <property type="entry name" value="2TM_P5A-ATPase"/>
    <property type="match status" value="1"/>
</dbReference>
<dbReference type="Pfam" id="PF00122">
    <property type="entry name" value="E1-E2_ATPase"/>
    <property type="match status" value="1"/>
</dbReference>
<dbReference type="PRINTS" id="PR00119">
    <property type="entry name" value="CATATPASE"/>
</dbReference>
<dbReference type="SFLD" id="SFLDG00002">
    <property type="entry name" value="C1.7:_P-type_atpase_like"/>
    <property type="match status" value="1"/>
</dbReference>
<dbReference type="SFLD" id="SFLDF00027">
    <property type="entry name" value="p-type_atpase"/>
    <property type="match status" value="1"/>
</dbReference>
<dbReference type="SUPFAM" id="SSF81653">
    <property type="entry name" value="Calcium ATPase, transduction domain A"/>
    <property type="match status" value="1"/>
</dbReference>
<dbReference type="SUPFAM" id="SSF81665">
    <property type="entry name" value="Calcium ATPase, transmembrane domain M"/>
    <property type="match status" value="1"/>
</dbReference>
<dbReference type="SUPFAM" id="SSF56784">
    <property type="entry name" value="HAD-like"/>
    <property type="match status" value="1"/>
</dbReference>
<dbReference type="SUPFAM" id="SSF81660">
    <property type="entry name" value="Metal cation-transporting ATPase, ATP-binding domain N"/>
    <property type="match status" value="1"/>
</dbReference>
<dbReference type="PROSITE" id="PS00154">
    <property type="entry name" value="ATPASE_E1_E2"/>
    <property type="match status" value="1"/>
</dbReference>